<protein>
    <recommendedName>
        <fullName>Nisin immunity protein</fullName>
    </recommendedName>
</protein>
<sequence>MRRYLILIVALIGITGLSGCYQTSHKKVRFDEGSYTNFIYDNKSYFVTDKEIPQENVNNSKVKFYKLLIVDMKSEKLLSSSNKNSVTLVLNNIYEASDKSLCMGINDRYYKILPESDKGAVKALRLQNFDVTSDISDDNFVIDKNDSRKIDYMGNIYSISDTTVSDEELGEYQDVLAEVRVFDSVSGKSIPRSEWGRIDKDGSNSKQSRTEWDYGEIHSIRGKSLTEAFAVEINDDFKLATKVGN</sequence>
<proteinExistence type="evidence at protein level"/>
<accession>P42708</accession>
<feature type="signal peptide" evidence="1">
    <location>
        <begin position="1"/>
        <end position="19"/>
    </location>
</feature>
<feature type="chain" id="PRO_0000017152" description="Nisin immunity protein">
    <location>
        <begin position="20"/>
        <end position="245"/>
    </location>
</feature>
<feature type="lipid moiety-binding region" description="N-palmitoyl cysteine" evidence="1">
    <location>
        <position position="20"/>
    </location>
</feature>
<feature type="lipid moiety-binding region" description="S-diacylglycerol cysteine" evidence="1">
    <location>
        <position position="20"/>
    </location>
</feature>
<feature type="strand" evidence="4">
    <location>
        <begin position="35"/>
        <end position="40"/>
    </location>
</feature>
<feature type="strand" evidence="4">
    <location>
        <begin position="43"/>
        <end position="51"/>
    </location>
</feature>
<feature type="helix" evidence="4">
    <location>
        <begin position="54"/>
        <end position="56"/>
    </location>
</feature>
<feature type="strand" evidence="4">
    <location>
        <begin position="57"/>
        <end position="71"/>
    </location>
</feature>
<feature type="turn" evidence="4">
    <location>
        <begin position="72"/>
        <end position="74"/>
    </location>
</feature>
<feature type="strand" evidence="4">
    <location>
        <begin position="77"/>
        <end position="80"/>
    </location>
</feature>
<feature type="strand" evidence="4">
    <location>
        <begin position="85"/>
        <end position="96"/>
    </location>
</feature>
<feature type="strand" evidence="4">
    <location>
        <begin position="101"/>
        <end position="105"/>
    </location>
</feature>
<feature type="strand" evidence="4">
    <location>
        <begin position="108"/>
        <end position="114"/>
    </location>
</feature>
<feature type="helix" evidence="4">
    <location>
        <begin position="115"/>
        <end position="117"/>
    </location>
</feature>
<feature type="turn" evidence="3">
    <location>
        <begin position="118"/>
        <end position="120"/>
    </location>
</feature>
<feature type="helix" evidence="4">
    <location>
        <begin position="126"/>
        <end position="128"/>
    </location>
</feature>
<feature type="strand" evidence="2">
    <location>
        <begin position="141"/>
        <end position="143"/>
    </location>
</feature>
<feature type="strand" evidence="4">
    <location>
        <begin position="149"/>
        <end position="152"/>
    </location>
</feature>
<feature type="strand" evidence="4">
    <location>
        <begin position="155"/>
        <end position="163"/>
    </location>
</feature>
<feature type="turn" evidence="4">
    <location>
        <begin position="166"/>
        <end position="168"/>
    </location>
</feature>
<feature type="strand" evidence="4">
    <location>
        <begin position="169"/>
        <end position="183"/>
    </location>
</feature>
<feature type="turn" evidence="4">
    <location>
        <begin position="184"/>
        <end position="186"/>
    </location>
</feature>
<feature type="helix" evidence="4">
    <location>
        <begin position="192"/>
        <end position="194"/>
    </location>
</feature>
<feature type="strand" evidence="2">
    <location>
        <begin position="200"/>
        <end position="202"/>
    </location>
</feature>
<feature type="strand" evidence="4">
    <location>
        <begin position="209"/>
        <end position="220"/>
    </location>
</feature>
<feature type="turn" evidence="4">
    <location>
        <begin position="225"/>
        <end position="227"/>
    </location>
</feature>
<feature type="strand" evidence="4">
    <location>
        <begin position="228"/>
        <end position="233"/>
    </location>
</feature>
<feature type="strand" evidence="4">
    <location>
        <begin position="236"/>
        <end position="242"/>
    </location>
</feature>
<dbReference type="EMBL" id="L16226">
    <property type="protein sequence ID" value="AAA25193.1"/>
    <property type="molecule type" value="Genomic_DNA"/>
</dbReference>
<dbReference type="EMBL" id="X76884">
    <property type="protein sequence ID" value="CAA54209.1"/>
    <property type="molecule type" value="Genomic_DNA"/>
</dbReference>
<dbReference type="PIR" id="S36738">
    <property type="entry name" value="S36738"/>
</dbReference>
<dbReference type="RefSeq" id="WP_014570409.1">
    <property type="nucleotide sequence ID" value="NZ_ML956318.1"/>
</dbReference>
<dbReference type="PDB" id="2N2E">
    <property type="method" value="NMR"/>
    <property type="chains" value="A=117-245"/>
</dbReference>
<dbReference type="PDB" id="2N32">
    <property type="method" value="NMR"/>
    <property type="chains" value="A=21-129"/>
</dbReference>
<dbReference type="PDB" id="5XHB">
    <property type="method" value="X-ray"/>
    <property type="resolution" value="1.90 A"/>
    <property type="chains" value="A=22-245"/>
</dbReference>
<dbReference type="PDBsum" id="2N2E"/>
<dbReference type="PDBsum" id="2N32"/>
<dbReference type="PDBsum" id="5XHB"/>
<dbReference type="BMRB" id="P42708"/>
<dbReference type="SMR" id="P42708"/>
<dbReference type="EvolutionaryTrace" id="P42708"/>
<dbReference type="GO" id="GO:0005886">
    <property type="term" value="C:plasma membrane"/>
    <property type="evidence" value="ECO:0007669"/>
    <property type="project" value="UniProtKB-SubCell"/>
</dbReference>
<dbReference type="GO" id="GO:0030153">
    <property type="term" value="P:bacteriocin immunity"/>
    <property type="evidence" value="ECO:0007669"/>
    <property type="project" value="UniProtKB-KW"/>
</dbReference>
<dbReference type="Gene3D" id="2.170.150.60">
    <property type="match status" value="1"/>
</dbReference>
<dbReference type="InterPro" id="IPR040876">
    <property type="entry name" value="Spa1_C"/>
</dbReference>
<dbReference type="NCBIfam" id="NF033433">
    <property type="entry name" value="NisI_immun_dup"/>
    <property type="match status" value="2"/>
</dbReference>
<dbReference type="Pfam" id="PF18218">
    <property type="entry name" value="Spa1_C"/>
    <property type="match status" value="1"/>
</dbReference>
<dbReference type="PROSITE" id="PS51257">
    <property type="entry name" value="PROKAR_LIPOPROTEIN"/>
    <property type="match status" value="1"/>
</dbReference>
<reference key="1">
    <citation type="journal article" date="1993" name="Eur. J. Biochem.">
        <title>Characterization of the nisin gene cluster nisABTCIPR of Lactococcus lactis. Requirement of expression of the nisA and nisI genes for development of immunity.</title>
        <authorList>
            <person name="Kuipers O.P."/>
            <person name="Beerthuyzen M.M."/>
            <person name="Siezen R.J."/>
            <person name="de Vos W.M."/>
        </authorList>
    </citation>
    <scope>NUCLEOTIDE SEQUENCE [GENOMIC DNA]</scope>
    <source>
        <strain>NIZO R5</strain>
    </source>
</reference>
<reference key="2">
    <citation type="journal article" date="1994" name="Appl. Environ. Microbiol.">
        <title>Regulation of nisin biosynthesis and immunity in Lactococcus lactis 6F3.</title>
        <authorList>
            <person name="Engelke G."/>
            <person name="Gutowski-Eckel Z."/>
            <person name="Kiesau P."/>
            <person name="Siegers K."/>
            <person name="Hammelmann M."/>
            <person name="Entian K.-D."/>
        </authorList>
    </citation>
    <scope>NUCLEOTIDE SEQUENCE [GENOMIC DNA]</scope>
    <source>
        <strain>6F3</strain>
    </source>
</reference>
<keyword id="KW-0002">3D-structure</keyword>
<keyword id="KW-0079">Bacteriocin immunity</keyword>
<keyword id="KW-1003">Cell membrane</keyword>
<keyword id="KW-0449">Lipoprotein</keyword>
<keyword id="KW-0472">Membrane</keyword>
<keyword id="KW-0564">Palmitate</keyword>
<keyword id="KW-0732">Signal</keyword>
<organism>
    <name type="scientific">Lactococcus lactis subsp. lactis</name>
    <name type="common">Streptococcus lactis</name>
    <dbReference type="NCBI Taxonomy" id="1360"/>
    <lineage>
        <taxon>Bacteria</taxon>
        <taxon>Bacillati</taxon>
        <taxon>Bacillota</taxon>
        <taxon>Bacilli</taxon>
        <taxon>Lactobacillales</taxon>
        <taxon>Streptococcaceae</taxon>
        <taxon>Lactococcus</taxon>
    </lineage>
</organism>
<comment type="function">
    <text>Involved in immunity against exogenously supplied nisin.</text>
</comment>
<comment type="subcellular location">
    <subcellularLocation>
        <location evidence="1">Cell membrane</location>
        <topology evidence="1">Lipid-anchor</topology>
    </subcellularLocation>
</comment>
<gene>
    <name type="primary">nisI</name>
</gene>
<name>NISI_LACLL</name>
<evidence type="ECO:0000255" key="1">
    <source>
        <dbReference type="PROSITE-ProRule" id="PRU00303"/>
    </source>
</evidence>
<evidence type="ECO:0007829" key="2">
    <source>
        <dbReference type="PDB" id="2N2E"/>
    </source>
</evidence>
<evidence type="ECO:0007829" key="3">
    <source>
        <dbReference type="PDB" id="2N32"/>
    </source>
</evidence>
<evidence type="ECO:0007829" key="4">
    <source>
        <dbReference type="PDB" id="5XHB"/>
    </source>
</evidence>